<name>RRF_DESOH</name>
<protein>
    <recommendedName>
        <fullName evidence="1">Ribosome-recycling factor</fullName>
        <shortName evidence="1">RRF</shortName>
    </recommendedName>
    <alternativeName>
        <fullName evidence="1">Ribosome-releasing factor</fullName>
    </alternativeName>
</protein>
<accession>A8ZTM3</accession>
<reference key="1">
    <citation type="submission" date="2007-10" db="EMBL/GenBank/DDBJ databases">
        <title>Complete sequence of Desulfococcus oleovorans Hxd3.</title>
        <authorList>
            <consortium name="US DOE Joint Genome Institute"/>
            <person name="Copeland A."/>
            <person name="Lucas S."/>
            <person name="Lapidus A."/>
            <person name="Barry K."/>
            <person name="Glavina del Rio T."/>
            <person name="Dalin E."/>
            <person name="Tice H."/>
            <person name="Pitluck S."/>
            <person name="Kiss H."/>
            <person name="Brettin T."/>
            <person name="Bruce D."/>
            <person name="Detter J.C."/>
            <person name="Han C."/>
            <person name="Schmutz J."/>
            <person name="Larimer F."/>
            <person name="Land M."/>
            <person name="Hauser L."/>
            <person name="Kyrpides N."/>
            <person name="Kim E."/>
            <person name="Wawrik B."/>
            <person name="Richardson P."/>
        </authorList>
    </citation>
    <scope>NUCLEOTIDE SEQUENCE [LARGE SCALE GENOMIC DNA]</scope>
    <source>
        <strain>DSM 6200 / JCM 39069 / Hxd3</strain>
    </source>
</reference>
<gene>
    <name evidence="1" type="primary">frr</name>
    <name type="ordered locus">Dole_0477</name>
</gene>
<dbReference type="EMBL" id="CP000859">
    <property type="protein sequence ID" value="ABW66287.1"/>
    <property type="molecule type" value="Genomic_DNA"/>
</dbReference>
<dbReference type="RefSeq" id="WP_012173906.1">
    <property type="nucleotide sequence ID" value="NC_009943.1"/>
</dbReference>
<dbReference type="SMR" id="A8ZTM3"/>
<dbReference type="STRING" id="96561.Dole_0477"/>
<dbReference type="KEGG" id="dol:Dole_0477"/>
<dbReference type="eggNOG" id="COG0233">
    <property type="taxonomic scope" value="Bacteria"/>
</dbReference>
<dbReference type="HOGENOM" id="CLU_073981_2_0_7"/>
<dbReference type="OrthoDB" id="9804006at2"/>
<dbReference type="Proteomes" id="UP000008561">
    <property type="component" value="Chromosome"/>
</dbReference>
<dbReference type="GO" id="GO:0005737">
    <property type="term" value="C:cytoplasm"/>
    <property type="evidence" value="ECO:0007669"/>
    <property type="project" value="UniProtKB-SubCell"/>
</dbReference>
<dbReference type="GO" id="GO:0043023">
    <property type="term" value="F:ribosomal large subunit binding"/>
    <property type="evidence" value="ECO:0007669"/>
    <property type="project" value="TreeGrafter"/>
</dbReference>
<dbReference type="GO" id="GO:0006415">
    <property type="term" value="P:translational termination"/>
    <property type="evidence" value="ECO:0007669"/>
    <property type="project" value="UniProtKB-UniRule"/>
</dbReference>
<dbReference type="CDD" id="cd00520">
    <property type="entry name" value="RRF"/>
    <property type="match status" value="1"/>
</dbReference>
<dbReference type="FunFam" id="1.10.132.20:FF:000001">
    <property type="entry name" value="Ribosome-recycling factor"/>
    <property type="match status" value="1"/>
</dbReference>
<dbReference type="FunFam" id="3.30.1360.40:FF:000001">
    <property type="entry name" value="Ribosome-recycling factor"/>
    <property type="match status" value="1"/>
</dbReference>
<dbReference type="Gene3D" id="3.30.1360.40">
    <property type="match status" value="1"/>
</dbReference>
<dbReference type="Gene3D" id="1.10.132.20">
    <property type="entry name" value="Ribosome-recycling factor"/>
    <property type="match status" value="1"/>
</dbReference>
<dbReference type="HAMAP" id="MF_00040">
    <property type="entry name" value="RRF"/>
    <property type="match status" value="1"/>
</dbReference>
<dbReference type="InterPro" id="IPR002661">
    <property type="entry name" value="Ribosome_recyc_fac"/>
</dbReference>
<dbReference type="InterPro" id="IPR023584">
    <property type="entry name" value="Ribosome_recyc_fac_dom"/>
</dbReference>
<dbReference type="InterPro" id="IPR036191">
    <property type="entry name" value="RRF_sf"/>
</dbReference>
<dbReference type="NCBIfam" id="TIGR00496">
    <property type="entry name" value="frr"/>
    <property type="match status" value="1"/>
</dbReference>
<dbReference type="PANTHER" id="PTHR20982:SF3">
    <property type="entry name" value="MITOCHONDRIAL RIBOSOME RECYCLING FACTOR PSEUDO 1"/>
    <property type="match status" value="1"/>
</dbReference>
<dbReference type="PANTHER" id="PTHR20982">
    <property type="entry name" value="RIBOSOME RECYCLING FACTOR"/>
    <property type="match status" value="1"/>
</dbReference>
<dbReference type="Pfam" id="PF01765">
    <property type="entry name" value="RRF"/>
    <property type="match status" value="1"/>
</dbReference>
<dbReference type="SUPFAM" id="SSF55194">
    <property type="entry name" value="Ribosome recycling factor, RRF"/>
    <property type="match status" value="1"/>
</dbReference>
<organism>
    <name type="scientific">Desulfosudis oleivorans (strain DSM 6200 / JCM 39069 / Hxd3)</name>
    <name type="common">Desulfococcus oleovorans</name>
    <dbReference type="NCBI Taxonomy" id="96561"/>
    <lineage>
        <taxon>Bacteria</taxon>
        <taxon>Pseudomonadati</taxon>
        <taxon>Thermodesulfobacteriota</taxon>
        <taxon>Desulfobacteria</taxon>
        <taxon>Desulfobacterales</taxon>
        <taxon>Desulfosudaceae</taxon>
        <taxon>Desulfosudis</taxon>
    </lineage>
</organism>
<comment type="function">
    <text evidence="1">Responsible for the release of ribosomes from messenger RNA at the termination of protein biosynthesis. May increase the efficiency of translation by recycling ribosomes from one round of translation to another.</text>
</comment>
<comment type="subcellular location">
    <subcellularLocation>
        <location evidence="1">Cytoplasm</location>
    </subcellularLocation>
</comment>
<comment type="similarity">
    <text evidence="1">Belongs to the RRF family.</text>
</comment>
<feature type="chain" id="PRO_1000090736" description="Ribosome-recycling factor">
    <location>
        <begin position="1"/>
        <end position="185"/>
    </location>
</feature>
<sequence>MLELVYEEIEEKMGKTLEVFKNDLKKVRTGRASLALLDGIVVDYYGTPTPLNQLASLSVPESRLIVIQPWDATAIKDVEKAILQANIDLTPSNDGKVIRLSIPPLTEDRRKEIAKRVNQMAEEHKVAMRNIRRDANETLKQMKKDGDISEDESFAGKDKVQKVTDGYIERIDEVFKAKEKEILEL</sequence>
<evidence type="ECO:0000255" key="1">
    <source>
        <dbReference type="HAMAP-Rule" id="MF_00040"/>
    </source>
</evidence>
<proteinExistence type="inferred from homology"/>
<keyword id="KW-0963">Cytoplasm</keyword>
<keyword id="KW-0648">Protein biosynthesis</keyword>
<keyword id="KW-1185">Reference proteome</keyword>